<dbReference type="EC" id="2.4.2.43" evidence="1"/>
<dbReference type="EMBL" id="CP000266">
    <property type="protein sequence ID" value="ABF04439.1"/>
    <property type="status" value="ALT_INIT"/>
    <property type="molecule type" value="Genomic_DNA"/>
</dbReference>
<dbReference type="RefSeq" id="WP_000844002.1">
    <property type="nucleotide sequence ID" value="NC_008258.1"/>
</dbReference>
<dbReference type="SMR" id="Q0T2M6"/>
<dbReference type="CAZy" id="GT83">
    <property type="family name" value="Glycosyltransferase Family 83"/>
</dbReference>
<dbReference type="KEGG" id="sfv:SFV_2327"/>
<dbReference type="HOGENOM" id="CLU_019200_2_0_6"/>
<dbReference type="UniPathway" id="UPA00037"/>
<dbReference type="Proteomes" id="UP000000659">
    <property type="component" value="Chromosome"/>
</dbReference>
<dbReference type="GO" id="GO:0005886">
    <property type="term" value="C:plasma membrane"/>
    <property type="evidence" value="ECO:0007669"/>
    <property type="project" value="UniProtKB-SubCell"/>
</dbReference>
<dbReference type="GO" id="GO:0103015">
    <property type="term" value="F:4-amino-4-deoxy-L-arabinose transferase activity"/>
    <property type="evidence" value="ECO:0007669"/>
    <property type="project" value="UniProtKB-EC"/>
</dbReference>
<dbReference type="GO" id="GO:0000030">
    <property type="term" value="F:mannosyltransferase activity"/>
    <property type="evidence" value="ECO:0007669"/>
    <property type="project" value="InterPro"/>
</dbReference>
<dbReference type="GO" id="GO:0009245">
    <property type="term" value="P:lipid A biosynthetic process"/>
    <property type="evidence" value="ECO:0007669"/>
    <property type="project" value="UniProtKB-UniRule"/>
</dbReference>
<dbReference type="GO" id="GO:0009103">
    <property type="term" value="P:lipopolysaccharide biosynthetic process"/>
    <property type="evidence" value="ECO:0007669"/>
    <property type="project" value="UniProtKB-KW"/>
</dbReference>
<dbReference type="GO" id="GO:0006493">
    <property type="term" value="P:protein O-linked glycosylation"/>
    <property type="evidence" value="ECO:0007669"/>
    <property type="project" value="InterPro"/>
</dbReference>
<dbReference type="GO" id="GO:0010041">
    <property type="term" value="P:response to iron(III) ion"/>
    <property type="evidence" value="ECO:0007669"/>
    <property type="project" value="TreeGrafter"/>
</dbReference>
<dbReference type="HAMAP" id="MF_01165">
    <property type="entry name" value="ArnT_transfer"/>
    <property type="match status" value="1"/>
</dbReference>
<dbReference type="InterPro" id="IPR022839">
    <property type="entry name" value="ArnT_tfrase"/>
</dbReference>
<dbReference type="InterPro" id="IPR003342">
    <property type="entry name" value="Glyco_trans_39/83"/>
</dbReference>
<dbReference type="InterPro" id="IPR050297">
    <property type="entry name" value="LipidA_mod_glycosyltrf_83"/>
</dbReference>
<dbReference type="NCBIfam" id="NF009784">
    <property type="entry name" value="PRK13279.1"/>
    <property type="match status" value="1"/>
</dbReference>
<dbReference type="PANTHER" id="PTHR33908">
    <property type="entry name" value="MANNOSYLTRANSFERASE YKCB-RELATED"/>
    <property type="match status" value="1"/>
</dbReference>
<dbReference type="PANTHER" id="PTHR33908:SF3">
    <property type="entry name" value="UNDECAPRENYL PHOSPHATE-ALPHA-4-AMINO-4-DEOXY-L-ARABINOSE ARABINOSYL TRANSFERASE"/>
    <property type="match status" value="1"/>
</dbReference>
<dbReference type="Pfam" id="PF02366">
    <property type="entry name" value="PMT"/>
    <property type="match status" value="1"/>
</dbReference>
<keyword id="KW-0997">Cell inner membrane</keyword>
<keyword id="KW-1003">Cell membrane</keyword>
<keyword id="KW-0328">Glycosyltransferase</keyword>
<keyword id="KW-0441">Lipid A biosynthesis</keyword>
<keyword id="KW-0444">Lipid biosynthesis</keyword>
<keyword id="KW-0443">Lipid metabolism</keyword>
<keyword id="KW-0448">Lipopolysaccharide biosynthesis</keyword>
<keyword id="KW-0472">Membrane</keyword>
<keyword id="KW-0808">Transferase</keyword>
<keyword id="KW-0812">Transmembrane</keyword>
<keyword id="KW-1133">Transmembrane helix</keyword>
<proteinExistence type="inferred from homology"/>
<protein>
    <recommendedName>
        <fullName evidence="1">Undecaprenyl phosphate-alpha-4-amino-4-deoxy-L-arabinose arabinosyl transferase</fullName>
        <ecNumber evidence="1">2.4.2.43</ecNumber>
    </recommendedName>
    <alternativeName>
        <fullName evidence="1">4-amino-4-deoxy-L-arabinose lipid A transferase</fullName>
    </alternativeName>
    <alternativeName>
        <fullName evidence="1">Lipid IV(A) 4-amino-4-deoxy-L-arabinosyltransferase</fullName>
    </alternativeName>
    <alternativeName>
        <fullName evidence="1">Undecaprenyl phosphate-alpha-L-Ara4N transferase</fullName>
    </alternativeName>
</protein>
<name>ARNT_SHIF8</name>
<comment type="function">
    <text evidence="1">Catalyzes the transfer of the L-Ara4N moiety of the glycolipid undecaprenyl phosphate-alpha-L-Ara4N to lipid A. The modified arabinose is attached to lipid A and is required for resistance to polymyxin and cationic antimicrobial peptides.</text>
</comment>
<comment type="catalytic activity">
    <reaction evidence="1">
        <text>4-amino-4-deoxy-alpha-L-arabinopyranosyl di-trans,octa-cis-undecaprenyl phosphate + lipid IVA = lipid IIA + di-trans,octa-cis-undecaprenyl phosphate.</text>
        <dbReference type="EC" id="2.4.2.43"/>
    </reaction>
</comment>
<comment type="pathway">
    <text evidence="1">Lipopolysaccharide metabolism; 4-amino-4-deoxy-beta-L-arabinose-lipid A biosynthesis.</text>
</comment>
<comment type="subcellular location">
    <subcellularLocation>
        <location evidence="1">Cell inner membrane</location>
        <topology evidence="1">Multi-pass membrane protein</topology>
    </subcellularLocation>
</comment>
<comment type="similarity">
    <text evidence="1">Belongs to the glycosyltransferase 83 family.</text>
</comment>
<comment type="sequence caution" evidence="2">
    <conflict type="erroneous initiation">
        <sequence resource="EMBL-CDS" id="ABF04439"/>
    </conflict>
</comment>
<sequence>MKSVRYLIGIFAFIACYYLLPISTRLLWQPDETRYAEISREMLASGDWIVPHLLGLRYFEKPIAGYWINSIGQWLFGANNFGVRAGVIFATLLTAALVTWFTLRLWRDKRLALLATVIYLSLFIVYAIGTYAVLDPFIAFWLVAGMCSFWLAMQAQTWKGKSAGFLLLGITCGMGVMTKGFLALAVPVLSVLPWVATQKRWKDLFIYGWLAVISCVLTVLPWGLAIAQREPDFWHYFFWVEHIQRFALDDAQHRAPFWYYVPVIIAGSLPWLGLLPGALYTGWKNRKHSATVYLLSWTIMPLLFFSVAKGKLPTYILSCFAPLAMLLAHYALLAAKNNPLALRINGWINIAFGVTGIIATFVISPWGPMNTPVWQTFESYKVFCAWSIFSLWAFFGWYTLTNVEKTWSFAALCPLGLALLVGFSIPDRVMEGKHPQFFVEMTQESLQPSRYILTDSVGVAAGLAWSLQRDDIIMYRQTGELKYGLNYPDAKGRFVSGDEFANWLNQHRQEGIITLVLSVDRDEDINSLAIPPADAIVRQERLVLIQYRPK</sequence>
<evidence type="ECO:0000255" key="1">
    <source>
        <dbReference type="HAMAP-Rule" id="MF_01165"/>
    </source>
</evidence>
<evidence type="ECO:0000305" key="2"/>
<reference key="1">
    <citation type="journal article" date="2006" name="BMC Genomics">
        <title>Complete genome sequence of Shigella flexneri 5b and comparison with Shigella flexneri 2a.</title>
        <authorList>
            <person name="Nie H."/>
            <person name="Yang F."/>
            <person name="Zhang X."/>
            <person name="Yang J."/>
            <person name="Chen L."/>
            <person name="Wang J."/>
            <person name="Xiong Z."/>
            <person name="Peng J."/>
            <person name="Sun L."/>
            <person name="Dong J."/>
            <person name="Xue Y."/>
            <person name="Xu X."/>
            <person name="Chen S."/>
            <person name="Yao Z."/>
            <person name="Shen Y."/>
            <person name="Jin Q."/>
        </authorList>
    </citation>
    <scope>NUCLEOTIDE SEQUENCE [LARGE SCALE GENOMIC DNA]</scope>
    <source>
        <strain>8401</strain>
    </source>
</reference>
<gene>
    <name evidence="1" type="primary">arnT</name>
    <name type="ordered locus">SFV_2327</name>
</gene>
<organism>
    <name type="scientific">Shigella flexneri serotype 5b (strain 8401)</name>
    <dbReference type="NCBI Taxonomy" id="373384"/>
    <lineage>
        <taxon>Bacteria</taxon>
        <taxon>Pseudomonadati</taxon>
        <taxon>Pseudomonadota</taxon>
        <taxon>Gammaproteobacteria</taxon>
        <taxon>Enterobacterales</taxon>
        <taxon>Enterobacteriaceae</taxon>
        <taxon>Shigella</taxon>
    </lineage>
</organism>
<feature type="chain" id="PRO_0000380039" description="Undecaprenyl phosphate-alpha-4-amino-4-deoxy-L-arabinose arabinosyl transferase">
    <location>
        <begin position="1"/>
        <end position="550"/>
    </location>
</feature>
<feature type="transmembrane region" description="Helical" evidence="1">
    <location>
        <begin position="7"/>
        <end position="27"/>
    </location>
</feature>
<feature type="transmembrane region" description="Helical" evidence="1">
    <location>
        <begin position="81"/>
        <end position="101"/>
    </location>
</feature>
<feature type="transmembrane region" description="Helical" evidence="1">
    <location>
        <begin position="111"/>
        <end position="133"/>
    </location>
</feature>
<feature type="transmembrane region" description="Helical" evidence="1">
    <location>
        <begin position="137"/>
        <end position="154"/>
    </location>
</feature>
<feature type="transmembrane region" description="Helical" evidence="1">
    <location>
        <begin position="165"/>
        <end position="185"/>
    </location>
</feature>
<feature type="transmembrane region" description="Helical" evidence="1">
    <location>
        <begin position="204"/>
        <end position="224"/>
    </location>
</feature>
<feature type="transmembrane region" description="Helical" evidence="1">
    <location>
        <begin position="255"/>
        <end position="275"/>
    </location>
</feature>
<feature type="transmembrane region" description="Helical" evidence="1">
    <location>
        <begin position="288"/>
        <end position="308"/>
    </location>
</feature>
<feature type="transmembrane region" description="Helical" evidence="1">
    <location>
        <begin position="315"/>
        <end position="335"/>
    </location>
</feature>
<feature type="transmembrane region" description="Helical" evidence="1">
    <location>
        <begin position="346"/>
        <end position="366"/>
    </location>
</feature>
<feature type="transmembrane region" description="Helical" evidence="1">
    <location>
        <begin position="382"/>
        <end position="402"/>
    </location>
</feature>
<feature type="transmembrane region" description="Helical" evidence="1">
    <location>
        <begin position="406"/>
        <end position="426"/>
    </location>
</feature>
<accession>Q0T2M6</accession>